<evidence type="ECO:0000255" key="1">
    <source>
        <dbReference type="HAMAP-Rule" id="MF_01674"/>
    </source>
</evidence>
<name>SEPS_METTH</name>
<sequence>MKRKDIVKLSRRDFERAWLESGKSLRKPHHDMQYPRLRFETGKSHVLYDTIWMIREAYLRLGFSEMVNPLLIDEEHIYRQFGPEAPAVLDRCFYLGGLPRPDIGLGTGRIQMIEDMGIDVSDEKLENLKEVFRSYKKGDLSGDDLVLEVSNALEVESHDGLRVLERVFPEIRDLKPVSGRTTLRSHMTSGWFISLQNIHDRYRMPLKLFSIDRCFRREQKEDSSHLMTYHSASCVVVDHEVPLDVGKAVAEGLLEHLGFSRFRFRPDEKKSKYYIPGTQTEVYAYHPLLKEWVEVATFGLYSPIALSMYGIDQEVMNLGVGVERVAMILNQASDVREMVYPQIYGEWRLSDRDIAEMLRINLHPVTSDGRMLMEKIVKTWRAHADAPSPCSFEVYSGEFLGRRIEVSALEVEENTRLLGPAVWNTVYIHDGNILGVPPGTELDSELITRARKEGLNTGITYMEALAAEAAYRIEEMVVSGAEEVEVRSTIARSLSDLNLTLEDTAMRYITGKNREIDLRGPLFSTIRCRLRG</sequence>
<reference key="1">
    <citation type="journal article" date="1997" name="J. Bacteriol.">
        <title>Complete genome sequence of Methanobacterium thermoautotrophicum deltaH: functional analysis and comparative genomics.</title>
        <authorList>
            <person name="Smith D.R."/>
            <person name="Doucette-Stamm L.A."/>
            <person name="Deloughery C."/>
            <person name="Lee H.-M."/>
            <person name="Dubois J."/>
            <person name="Aldredge T."/>
            <person name="Bashirzadeh R."/>
            <person name="Blakely D."/>
            <person name="Cook R."/>
            <person name="Gilbert K."/>
            <person name="Harrison D."/>
            <person name="Hoang L."/>
            <person name="Keagle P."/>
            <person name="Lumm W."/>
            <person name="Pothier B."/>
            <person name="Qiu D."/>
            <person name="Spadafora R."/>
            <person name="Vicare R."/>
            <person name="Wang Y."/>
            <person name="Wierzbowski J."/>
            <person name="Gibson R."/>
            <person name="Jiwani N."/>
            <person name="Caruso A."/>
            <person name="Bush D."/>
            <person name="Safer H."/>
            <person name="Patwell D."/>
            <person name="Prabhakar S."/>
            <person name="McDougall S."/>
            <person name="Shimer G."/>
            <person name="Goyal A."/>
            <person name="Pietrovski S."/>
            <person name="Church G.M."/>
            <person name="Daniels C.J."/>
            <person name="Mao J.-I."/>
            <person name="Rice P."/>
            <person name="Noelling J."/>
            <person name="Reeve J.N."/>
        </authorList>
    </citation>
    <scope>NUCLEOTIDE SEQUENCE [LARGE SCALE GENOMIC DNA]</scope>
    <source>
        <strain>ATCC 29096 / DSM 1053 / JCM 10044 / NBRC 100330 / Delta H</strain>
    </source>
</reference>
<dbReference type="EC" id="6.1.1.27" evidence="1"/>
<dbReference type="EMBL" id="AE000666">
    <property type="protein sequence ID" value="AAB85976.1"/>
    <property type="molecule type" value="Genomic_DNA"/>
</dbReference>
<dbReference type="PIR" id="C69067">
    <property type="entry name" value="C69067"/>
</dbReference>
<dbReference type="RefSeq" id="WP_010877111.1">
    <property type="nucleotide sequence ID" value="NC_000916.1"/>
</dbReference>
<dbReference type="SMR" id="O27545"/>
<dbReference type="FunCoup" id="O27545">
    <property type="interactions" value="25"/>
</dbReference>
<dbReference type="STRING" id="187420.MTH_1501"/>
<dbReference type="PaxDb" id="187420-MTH_1501"/>
<dbReference type="EnsemblBacteria" id="AAB85976">
    <property type="protein sequence ID" value="AAB85976"/>
    <property type="gene ID" value="MTH_1501"/>
</dbReference>
<dbReference type="GeneID" id="82297932"/>
<dbReference type="KEGG" id="mth:MTH_1501"/>
<dbReference type="PATRIC" id="fig|187420.15.peg.1464"/>
<dbReference type="HOGENOM" id="CLU_506822_0_0_2"/>
<dbReference type="InParanoid" id="O27545"/>
<dbReference type="Proteomes" id="UP000005223">
    <property type="component" value="Chromosome"/>
</dbReference>
<dbReference type="GO" id="GO:0005524">
    <property type="term" value="F:ATP binding"/>
    <property type="evidence" value="ECO:0007669"/>
    <property type="project" value="UniProtKB-UniRule"/>
</dbReference>
<dbReference type="GO" id="GO:0043816">
    <property type="term" value="F:phosphoserine-tRNA(Cys) ligase activity"/>
    <property type="evidence" value="ECO:0007669"/>
    <property type="project" value="UniProtKB-EC"/>
</dbReference>
<dbReference type="GO" id="GO:0000049">
    <property type="term" value="F:tRNA binding"/>
    <property type="evidence" value="ECO:0007669"/>
    <property type="project" value="InterPro"/>
</dbReference>
<dbReference type="GO" id="GO:0006412">
    <property type="term" value="P:translation"/>
    <property type="evidence" value="ECO:0007669"/>
    <property type="project" value="UniProtKB-KW"/>
</dbReference>
<dbReference type="GO" id="GO:0043039">
    <property type="term" value="P:tRNA aminoacylation"/>
    <property type="evidence" value="ECO:0007669"/>
    <property type="project" value="UniProtKB-UniRule"/>
</dbReference>
<dbReference type="Gene3D" id="3.30.930.10">
    <property type="entry name" value="Bira Bifunctional Protein, Domain 2"/>
    <property type="match status" value="1"/>
</dbReference>
<dbReference type="HAMAP" id="MF_01674">
    <property type="entry name" value="Sep_tRNA_synth"/>
    <property type="match status" value="1"/>
</dbReference>
<dbReference type="InterPro" id="IPR006195">
    <property type="entry name" value="aa-tRNA-synth_II"/>
</dbReference>
<dbReference type="InterPro" id="IPR045864">
    <property type="entry name" value="aa-tRNA-synth_II/BPL/LPL"/>
</dbReference>
<dbReference type="InterPro" id="IPR005246">
    <property type="entry name" value="O-Pseryl-tRNA(Cys)_ligase"/>
</dbReference>
<dbReference type="InterPro" id="IPR002319">
    <property type="entry name" value="Phenylalanyl-tRNA_Synthase"/>
</dbReference>
<dbReference type="InterPro" id="IPR041590">
    <property type="entry name" value="SepRS_C"/>
</dbReference>
<dbReference type="NCBIfam" id="TIGR00470">
    <property type="entry name" value="sepS"/>
    <property type="match status" value="1"/>
</dbReference>
<dbReference type="Pfam" id="PF18006">
    <property type="entry name" value="SepRS_C"/>
    <property type="match status" value="1"/>
</dbReference>
<dbReference type="Pfam" id="PF01409">
    <property type="entry name" value="tRNA-synt_2d"/>
    <property type="match status" value="1"/>
</dbReference>
<dbReference type="SUPFAM" id="SSF55681">
    <property type="entry name" value="Class II aaRS and biotin synthetases"/>
    <property type="match status" value="1"/>
</dbReference>
<dbReference type="PROSITE" id="PS50862">
    <property type="entry name" value="AA_TRNA_LIGASE_II"/>
    <property type="match status" value="1"/>
</dbReference>
<keyword id="KW-0030">Aminoacyl-tRNA synthetase</keyword>
<keyword id="KW-0067">ATP-binding</keyword>
<keyword id="KW-0436">Ligase</keyword>
<keyword id="KW-0547">Nucleotide-binding</keyword>
<keyword id="KW-0648">Protein biosynthesis</keyword>
<keyword id="KW-1185">Reference proteome</keyword>
<feature type="chain" id="PRO_0000363747" description="O-phosphoserine--tRNA(Cys) ligase">
    <location>
        <begin position="1"/>
        <end position="532"/>
    </location>
</feature>
<feature type="binding site" evidence="1">
    <location>
        <begin position="186"/>
        <end position="188"/>
    </location>
    <ligand>
        <name>substrate</name>
    </ligand>
</feature>
<feature type="binding site" evidence="1">
    <location>
        <begin position="231"/>
        <end position="233"/>
    </location>
    <ligand>
        <name>substrate</name>
    </ligand>
</feature>
<feature type="binding site" evidence="1">
    <location>
        <begin position="273"/>
        <end position="274"/>
    </location>
    <ligand>
        <name>substrate</name>
    </ligand>
</feature>
<feature type="binding site" evidence="1">
    <location>
        <position position="317"/>
    </location>
    <ligand>
        <name>substrate</name>
    </ligand>
</feature>
<proteinExistence type="inferred from homology"/>
<protein>
    <recommendedName>
        <fullName evidence="1">O-phosphoserine--tRNA(Cys) ligase</fullName>
        <shortName evidence="1">O-phosphoserine--tRNA ligase</shortName>
        <ecNumber evidence="1">6.1.1.27</ecNumber>
    </recommendedName>
    <alternativeName>
        <fullName evidence="1">Non-canonical O-phosphoseryl-tRNA(Cys) synthetase</fullName>
    </alternativeName>
    <alternativeName>
        <fullName evidence="1">O-phosphoseryl-tRNA(Cys) synthetase</fullName>
        <shortName evidence="1">SepRS</shortName>
    </alternativeName>
</protein>
<gene>
    <name evidence="1" type="primary">sepS</name>
    <name type="ordered locus">MTH_1501</name>
</gene>
<accession>O27545</accession>
<organism>
    <name type="scientific">Methanothermobacter thermautotrophicus (strain ATCC 29096 / DSM 1053 / JCM 10044 / NBRC 100330 / Delta H)</name>
    <name type="common">Methanobacterium thermoautotrophicum</name>
    <dbReference type="NCBI Taxonomy" id="187420"/>
    <lineage>
        <taxon>Archaea</taxon>
        <taxon>Methanobacteriati</taxon>
        <taxon>Methanobacteriota</taxon>
        <taxon>Methanomada group</taxon>
        <taxon>Methanobacteria</taxon>
        <taxon>Methanobacteriales</taxon>
        <taxon>Methanobacteriaceae</taxon>
        <taxon>Methanothermobacter</taxon>
    </lineage>
</organism>
<comment type="function">
    <text evidence="1">Catalyzes the attachment of O-phosphoserine (Sep) to tRNA(Cys).</text>
</comment>
<comment type="catalytic activity">
    <reaction evidence="1">
        <text>tRNA(Cys) + O-phospho-L-serine + ATP = O-phospho-L-seryl-tRNA(Cys) + AMP + diphosphate</text>
        <dbReference type="Rhea" id="RHEA:25678"/>
        <dbReference type="Rhea" id="RHEA-COMP:9661"/>
        <dbReference type="Rhea" id="RHEA-COMP:9719"/>
        <dbReference type="ChEBI" id="CHEBI:30616"/>
        <dbReference type="ChEBI" id="CHEBI:33019"/>
        <dbReference type="ChEBI" id="CHEBI:57524"/>
        <dbReference type="ChEBI" id="CHEBI:78442"/>
        <dbReference type="ChEBI" id="CHEBI:78551"/>
        <dbReference type="ChEBI" id="CHEBI:456215"/>
        <dbReference type="EC" id="6.1.1.27"/>
    </reaction>
</comment>
<comment type="subunit">
    <text evidence="1">Homotetramer. Interacts with SepCysS.</text>
</comment>
<comment type="similarity">
    <text evidence="1">Belongs to the class-II aminoacyl-tRNA synthetase family. O-phosphoseryl-tRNA(Cys) synthetase subfamily.</text>
</comment>